<accession>Q83I67</accession>
<feature type="chain" id="PRO_0000130745" description="Large ribosomal subunit protein uL24">
    <location>
        <begin position="1"/>
        <end position="113"/>
    </location>
</feature>
<feature type="region of interest" description="Disordered" evidence="2">
    <location>
        <begin position="48"/>
        <end position="70"/>
    </location>
</feature>
<evidence type="ECO:0000255" key="1">
    <source>
        <dbReference type="HAMAP-Rule" id="MF_01326"/>
    </source>
</evidence>
<evidence type="ECO:0000256" key="2">
    <source>
        <dbReference type="SAM" id="MobiDB-lite"/>
    </source>
</evidence>
<evidence type="ECO:0000305" key="3"/>
<name>RL24_TROW8</name>
<protein>
    <recommendedName>
        <fullName evidence="1">Large ribosomal subunit protein uL24</fullName>
    </recommendedName>
    <alternativeName>
        <fullName evidence="3">50S ribosomal protein L24</fullName>
    </alternativeName>
</protein>
<organism>
    <name type="scientific">Tropheryma whipplei (strain TW08/27)</name>
    <name type="common">Whipple's bacillus</name>
    <dbReference type="NCBI Taxonomy" id="218496"/>
    <lineage>
        <taxon>Bacteria</taxon>
        <taxon>Bacillati</taxon>
        <taxon>Actinomycetota</taxon>
        <taxon>Actinomycetes</taxon>
        <taxon>Micrococcales</taxon>
        <taxon>Tropherymataceae</taxon>
        <taxon>Tropheryma</taxon>
    </lineage>
</organism>
<sequence>MSVKIRKGDLVQVITGSKTGGKKGKQGRVLAVSGDRVWVEGVNLTTRHRKRVTNDKGTSSGGLEKRESPMHISNVALVDPETGAPTKVGFLVKTSGDKTVRVRFAKKSGKELT</sequence>
<keyword id="KW-0687">Ribonucleoprotein</keyword>
<keyword id="KW-0689">Ribosomal protein</keyword>
<keyword id="KW-0694">RNA-binding</keyword>
<keyword id="KW-0699">rRNA-binding</keyword>
<gene>
    <name evidence="1" type="primary">rplX</name>
    <name type="ordered locus">TW218</name>
</gene>
<proteinExistence type="inferred from homology"/>
<comment type="function">
    <text evidence="1">One of two assembly initiator proteins, it binds directly to the 5'-end of the 23S rRNA, where it nucleates assembly of the 50S subunit.</text>
</comment>
<comment type="function">
    <text evidence="1">One of the proteins that surrounds the polypeptide exit tunnel on the outside of the subunit.</text>
</comment>
<comment type="subunit">
    <text evidence="1">Part of the 50S ribosomal subunit.</text>
</comment>
<comment type="similarity">
    <text evidence="1">Belongs to the universal ribosomal protein uL24 family.</text>
</comment>
<dbReference type="EMBL" id="BX251410">
    <property type="protein sequence ID" value="CAD66895.1"/>
    <property type="molecule type" value="Genomic_DNA"/>
</dbReference>
<dbReference type="RefSeq" id="WP_011096176.1">
    <property type="nucleotide sequence ID" value="NC_004551.1"/>
</dbReference>
<dbReference type="SMR" id="Q83I67"/>
<dbReference type="GeneID" id="67387994"/>
<dbReference type="KEGG" id="tws:TW218"/>
<dbReference type="HOGENOM" id="CLU_093315_2_0_11"/>
<dbReference type="GO" id="GO:1990904">
    <property type="term" value="C:ribonucleoprotein complex"/>
    <property type="evidence" value="ECO:0007669"/>
    <property type="project" value="UniProtKB-KW"/>
</dbReference>
<dbReference type="GO" id="GO:0005840">
    <property type="term" value="C:ribosome"/>
    <property type="evidence" value="ECO:0007669"/>
    <property type="project" value="UniProtKB-KW"/>
</dbReference>
<dbReference type="GO" id="GO:0019843">
    <property type="term" value="F:rRNA binding"/>
    <property type="evidence" value="ECO:0007669"/>
    <property type="project" value="UniProtKB-UniRule"/>
</dbReference>
<dbReference type="GO" id="GO:0003735">
    <property type="term" value="F:structural constituent of ribosome"/>
    <property type="evidence" value="ECO:0007669"/>
    <property type="project" value="InterPro"/>
</dbReference>
<dbReference type="GO" id="GO:0006412">
    <property type="term" value="P:translation"/>
    <property type="evidence" value="ECO:0007669"/>
    <property type="project" value="UniProtKB-UniRule"/>
</dbReference>
<dbReference type="CDD" id="cd06089">
    <property type="entry name" value="KOW_RPL26"/>
    <property type="match status" value="1"/>
</dbReference>
<dbReference type="Gene3D" id="2.30.30.30">
    <property type="match status" value="1"/>
</dbReference>
<dbReference type="HAMAP" id="MF_01326_B">
    <property type="entry name" value="Ribosomal_uL24_B"/>
    <property type="match status" value="1"/>
</dbReference>
<dbReference type="InterPro" id="IPR014722">
    <property type="entry name" value="Rib_uL2_dom2"/>
</dbReference>
<dbReference type="InterPro" id="IPR003256">
    <property type="entry name" value="Ribosomal_uL24"/>
</dbReference>
<dbReference type="InterPro" id="IPR041988">
    <property type="entry name" value="Ribosomal_uL24_KOW"/>
</dbReference>
<dbReference type="InterPro" id="IPR008991">
    <property type="entry name" value="Translation_prot_SH3-like_sf"/>
</dbReference>
<dbReference type="NCBIfam" id="TIGR01079">
    <property type="entry name" value="rplX_bact"/>
    <property type="match status" value="1"/>
</dbReference>
<dbReference type="PANTHER" id="PTHR12903">
    <property type="entry name" value="MITOCHONDRIAL RIBOSOMAL PROTEIN L24"/>
    <property type="match status" value="1"/>
</dbReference>
<dbReference type="Pfam" id="PF17136">
    <property type="entry name" value="ribosomal_L24"/>
    <property type="match status" value="1"/>
</dbReference>
<dbReference type="SUPFAM" id="SSF50104">
    <property type="entry name" value="Translation proteins SH3-like domain"/>
    <property type="match status" value="1"/>
</dbReference>
<reference key="1">
    <citation type="journal article" date="2003" name="Lancet">
        <title>Sequencing and analysis of the genome of the Whipple's disease bacterium Tropheryma whipplei.</title>
        <authorList>
            <person name="Bentley S.D."/>
            <person name="Maiwald M."/>
            <person name="Murphy L.D."/>
            <person name="Pallen M.J."/>
            <person name="Yeats C.A."/>
            <person name="Dover L.G."/>
            <person name="Norbertczak H.T."/>
            <person name="Besra G.S."/>
            <person name="Quail M.A."/>
            <person name="Harris D.E."/>
            <person name="von Herbay A."/>
            <person name="Goble A."/>
            <person name="Rutter S."/>
            <person name="Squares R."/>
            <person name="Squares S."/>
            <person name="Barrell B.G."/>
            <person name="Parkhill J."/>
            <person name="Relman D.A."/>
        </authorList>
    </citation>
    <scope>NUCLEOTIDE SEQUENCE [LARGE SCALE GENOMIC DNA]</scope>
    <source>
        <strain>TW08/27</strain>
    </source>
</reference>